<feature type="chain" id="PRO_0000266902" description="Probable GTP-binding protein EngB">
    <location>
        <begin position="1"/>
        <end position="206"/>
    </location>
</feature>
<feature type="domain" description="EngB-type G" evidence="1">
    <location>
        <begin position="23"/>
        <end position="202"/>
    </location>
</feature>
<feature type="binding site" evidence="1">
    <location>
        <begin position="31"/>
        <end position="38"/>
    </location>
    <ligand>
        <name>GTP</name>
        <dbReference type="ChEBI" id="CHEBI:37565"/>
    </ligand>
</feature>
<feature type="binding site" evidence="1">
    <location>
        <position position="38"/>
    </location>
    <ligand>
        <name>Mg(2+)</name>
        <dbReference type="ChEBI" id="CHEBI:18420"/>
    </ligand>
</feature>
<feature type="binding site" evidence="1">
    <location>
        <begin position="58"/>
        <end position="62"/>
    </location>
    <ligand>
        <name>GTP</name>
        <dbReference type="ChEBI" id="CHEBI:37565"/>
    </ligand>
</feature>
<feature type="binding site" evidence="1">
    <location>
        <position position="60"/>
    </location>
    <ligand>
        <name>Mg(2+)</name>
        <dbReference type="ChEBI" id="CHEBI:18420"/>
    </ligand>
</feature>
<feature type="binding site" evidence="1">
    <location>
        <begin position="83"/>
        <end position="86"/>
    </location>
    <ligand>
        <name>GTP</name>
        <dbReference type="ChEBI" id="CHEBI:37565"/>
    </ligand>
</feature>
<feature type="binding site" evidence="1">
    <location>
        <begin position="150"/>
        <end position="153"/>
    </location>
    <ligand>
        <name>GTP</name>
        <dbReference type="ChEBI" id="CHEBI:37565"/>
    </ligand>
</feature>
<feature type="binding site" evidence="1">
    <location>
        <begin position="181"/>
        <end position="183"/>
    </location>
    <ligand>
        <name>GTP</name>
        <dbReference type="ChEBI" id="CHEBI:37565"/>
    </ligand>
</feature>
<keyword id="KW-0131">Cell cycle</keyword>
<keyword id="KW-0132">Cell division</keyword>
<keyword id="KW-0342">GTP-binding</keyword>
<keyword id="KW-0460">Magnesium</keyword>
<keyword id="KW-0479">Metal-binding</keyword>
<keyword id="KW-0547">Nucleotide-binding</keyword>
<keyword id="KW-1185">Reference proteome</keyword>
<keyword id="KW-0717">Septation</keyword>
<reference key="1">
    <citation type="journal article" date="2006" name="Proc. Natl. Acad. Sci. U.S.A.">
        <title>Evolution of sensory complexity recorded in a myxobacterial genome.</title>
        <authorList>
            <person name="Goldman B.S."/>
            <person name="Nierman W.C."/>
            <person name="Kaiser D."/>
            <person name="Slater S.C."/>
            <person name="Durkin A.S."/>
            <person name="Eisen J.A."/>
            <person name="Ronning C.M."/>
            <person name="Barbazuk W.B."/>
            <person name="Blanchard M."/>
            <person name="Field C."/>
            <person name="Halling C."/>
            <person name="Hinkle G."/>
            <person name="Iartchuk O."/>
            <person name="Kim H.S."/>
            <person name="Mackenzie C."/>
            <person name="Madupu R."/>
            <person name="Miller N."/>
            <person name="Shvartsbeyn A."/>
            <person name="Sullivan S.A."/>
            <person name="Vaudin M."/>
            <person name="Wiegand R."/>
            <person name="Kaplan H.B."/>
        </authorList>
    </citation>
    <scope>NUCLEOTIDE SEQUENCE [LARGE SCALE GENOMIC DNA]</scope>
    <source>
        <strain>DK1622</strain>
    </source>
</reference>
<sequence>MIKVLDARFVTTAVEPKGYPTDHTAEVAFVGRSNVGKSSMINALTGRRKLVRVSNTPGRTRTLNFFDVDLERGGVRHQIRLADLPGYGFAKASKADKAQWEKMITTYLEKRHRLEAVVSIVDVEVGPTPDDLTTLDYLQAHNRRVLVVATKVDRLTKARLKPRLVELSKLMDLPLEVILPFSSTEKLGVDEVWGALLDTFGKSARV</sequence>
<protein>
    <recommendedName>
        <fullName evidence="1">Probable GTP-binding protein EngB</fullName>
    </recommendedName>
</protein>
<dbReference type="EMBL" id="CP000113">
    <property type="protein sequence ID" value="ABF90279.1"/>
    <property type="molecule type" value="Genomic_DNA"/>
</dbReference>
<dbReference type="RefSeq" id="WP_011553080.1">
    <property type="nucleotide sequence ID" value="NC_008095.1"/>
</dbReference>
<dbReference type="SMR" id="Q1D7Z0"/>
<dbReference type="STRING" id="246197.MXAN_3024"/>
<dbReference type="EnsemblBacteria" id="ABF90279">
    <property type="protein sequence ID" value="ABF90279"/>
    <property type="gene ID" value="MXAN_3024"/>
</dbReference>
<dbReference type="GeneID" id="41360385"/>
<dbReference type="KEGG" id="mxa:MXAN_3024"/>
<dbReference type="eggNOG" id="COG0218">
    <property type="taxonomic scope" value="Bacteria"/>
</dbReference>
<dbReference type="HOGENOM" id="CLU_033732_1_1_7"/>
<dbReference type="OrthoDB" id="9804921at2"/>
<dbReference type="Proteomes" id="UP000002402">
    <property type="component" value="Chromosome"/>
</dbReference>
<dbReference type="GO" id="GO:0005829">
    <property type="term" value="C:cytosol"/>
    <property type="evidence" value="ECO:0007669"/>
    <property type="project" value="TreeGrafter"/>
</dbReference>
<dbReference type="GO" id="GO:0005525">
    <property type="term" value="F:GTP binding"/>
    <property type="evidence" value="ECO:0007669"/>
    <property type="project" value="UniProtKB-UniRule"/>
</dbReference>
<dbReference type="GO" id="GO:0046872">
    <property type="term" value="F:metal ion binding"/>
    <property type="evidence" value="ECO:0007669"/>
    <property type="project" value="UniProtKB-KW"/>
</dbReference>
<dbReference type="GO" id="GO:0000917">
    <property type="term" value="P:division septum assembly"/>
    <property type="evidence" value="ECO:0007669"/>
    <property type="project" value="UniProtKB-KW"/>
</dbReference>
<dbReference type="CDD" id="cd01876">
    <property type="entry name" value="YihA_EngB"/>
    <property type="match status" value="1"/>
</dbReference>
<dbReference type="Gene3D" id="3.40.50.300">
    <property type="entry name" value="P-loop containing nucleotide triphosphate hydrolases"/>
    <property type="match status" value="1"/>
</dbReference>
<dbReference type="HAMAP" id="MF_00321">
    <property type="entry name" value="GTPase_EngB"/>
    <property type="match status" value="1"/>
</dbReference>
<dbReference type="InterPro" id="IPR030393">
    <property type="entry name" value="G_ENGB_dom"/>
</dbReference>
<dbReference type="InterPro" id="IPR006073">
    <property type="entry name" value="GTP-bd"/>
</dbReference>
<dbReference type="InterPro" id="IPR019987">
    <property type="entry name" value="GTP-bd_ribosome_bio_YsxC"/>
</dbReference>
<dbReference type="InterPro" id="IPR027417">
    <property type="entry name" value="P-loop_NTPase"/>
</dbReference>
<dbReference type="NCBIfam" id="TIGR03598">
    <property type="entry name" value="GTPase_YsxC"/>
    <property type="match status" value="1"/>
</dbReference>
<dbReference type="PANTHER" id="PTHR11649:SF13">
    <property type="entry name" value="ENGB-TYPE G DOMAIN-CONTAINING PROTEIN"/>
    <property type="match status" value="1"/>
</dbReference>
<dbReference type="PANTHER" id="PTHR11649">
    <property type="entry name" value="MSS1/TRME-RELATED GTP-BINDING PROTEIN"/>
    <property type="match status" value="1"/>
</dbReference>
<dbReference type="Pfam" id="PF01926">
    <property type="entry name" value="MMR_HSR1"/>
    <property type="match status" value="1"/>
</dbReference>
<dbReference type="SUPFAM" id="SSF52540">
    <property type="entry name" value="P-loop containing nucleoside triphosphate hydrolases"/>
    <property type="match status" value="1"/>
</dbReference>
<dbReference type="PROSITE" id="PS51706">
    <property type="entry name" value="G_ENGB"/>
    <property type="match status" value="1"/>
</dbReference>
<proteinExistence type="inferred from homology"/>
<gene>
    <name evidence="1" type="primary">engB</name>
    <name type="ordered locus">MXAN_3024</name>
</gene>
<organism>
    <name type="scientific">Myxococcus xanthus (strain DK1622)</name>
    <dbReference type="NCBI Taxonomy" id="246197"/>
    <lineage>
        <taxon>Bacteria</taxon>
        <taxon>Pseudomonadati</taxon>
        <taxon>Myxococcota</taxon>
        <taxon>Myxococcia</taxon>
        <taxon>Myxococcales</taxon>
        <taxon>Cystobacterineae</taxon>
        <taxon>Myxococcaceae</taxon>
        <taxon>Myxococcus</taxon>
    </lineage>
</organism>
<comment type="function">
    <text evidence="1">Necessary for normal cell division and for the maintenance of normal septation.</text>
</comment>
<comment type="cofactor">
    <cofactor evidence="1">
        <name>Mg(2+)</name>
        <dbReference type="ChEBI" id="CHEBI:18420"/>
    </cofactor>
</comment>
<comment type="similarity">
    <text evidence="1">Belongs to the TRAFAC class TrmE-Era-EngA-EngB-Septin-like GTPase superfamily. EngB GTPase family.</text>
</comment>
<name>ENGB_MYXXD</name>
<accession>Q1D7Z0</accession>
<evidence type="ECO:0000255" key="1">
    <source>
        <dbReference type="HAMAP-Rule" id="MF_00321"/>
    </source>
</evidence>